<organism>
    <name type="scientific">Ralstonia nicotianae (strain ATCC BAA-1114 / GMI1000)</name>
    <name type="common">Ralstonia solanacearum</name>
    <dbReference type="NCBI Taxonomy" id="267608"/>
    <lineage>
        <taxon>Bacteria</taxon>
        <taxon>Pseudomonadati</taxon>
        <taxon>Pseudomonadota</taxon>
        <taxon>Betaproteobacteria</taxon>
        <taxon>Burkholderiales</taxon>
        <taxon>Burkholderiaceae</taxon>
        <taxon>Ralstonia</taxon>
        <taxon>Ralstonia solanacearum species complex</taxon>
    </lineage>
</organism>
<sequence length="366" mass="38986">MSGNTLGLLFSVTTFGESHGPAIGAVIDGCPPGMALSAEDIQPDLDRRKPGTSRHVTQRKEEDLVEILSGVFEGKTTGTPICLLIRNTDQRSKDYGNIVETFRPGHADYTYWHKYGIRDPRGGGRSSARLTAPVVAAGAVAKKWLREKFGVEIHGYMSQLGEIRIPFLDWNEVPNNPFFAPNAEILPELETYMDALRRDGDSVGARIEVVATGMPVGWGEPLFDRLDADIAHAMMGLNAVKGVEIGAGFHAVSQRGSEHGDELTPAGFVGNNAGGILGGISTGQDISVSLAIKPTSSIRTPRRSIDKAGEPTAVETFGRHDPCVGIRATPIAEALLALVLTDHALRHRAQCGDVAVATPAIAAKAP</sequence>
<accession>Q8XZ40</accession>
<protein>
    <recommendedName>
        <fullName evidence="1">Chorismate synthase</fullName>
        <shortName evidence="1">CS</shortName>
        <ecNumber evidence="1">4.2.3.5</ecNumber>
    </recommendedName>
    <alternativeName>
        <fullName evidence="1">5-enolpyruvylshikimate-3-phosphate phospholyase</fullName>
    </alternativeName>
</protein>
<proteinExistence type="inferred from homology"/>
<gene>
    <name evidence="1" type="primary">aroC</name>
    <name type="ordered locus">RSc1566</name>
    <name type="ORF">RS05253</name>
</gene>
<name>AROC_RALN1</name>
<keyword id="KW-0028">Amino-acid biosynthesis</keyword>
<keyword id="KW-0057">Aromatic amino acid biosynthesis</keyword>
<keyword id="KW-0274">FAD</keyword>
<keyword id="KW-0285">Flavoprotein</keyword>
<keyword id="KW-0288">FMN</keyword>
<keyword id="KW-0456">Lyase</keyword>
<keyword id="KW-0521">NADP</keyword>
<keyword id="KW-1185">Reference proteome</keyword>
<reference key="1">
    <citation type="journal article" date="2002" name="Nature">
        <title>Genome sequence of the plant pathogen Ralstonia solanacearum.</title>
        <authorList>
            <person name="Salanoubat M."/>
            <person name="Genin S."/>
            <person name="Artiguenave F."/>
            <person name="Gouzy J."/>
            <person name="Mangenot S."/>
            <person name="Arlat M."/>
            <person name="Billault A."/>
            <person name="Brottier P."/>
            <person name="Camus J.-C."/>
            <person name="Cattolico L."/>
            <person name="Chandler M."/>
            <person name="Choisne N."/>
            <person name="Claudel-Renard C."/>
            <person name="Cunnac S."/>
            <person name="Demange N."/>
            <person name="Gaspin C."/>
            <person name="Lavie M."/>
            <person name="Moisan A."/>
            <person name="Robert C."/>
            <person name="Saurin W."/>
            <person name="Schiex T."/>
            <person name="Siguier P."/>
            <person name="Thebault P."/>
            <person name="Whalen M."/>
            <person name="Wincker P."/>
            <person name="Levy M."/>
            <person name="Weissenbach J."/>
            <person name="Boucher C.A."/>
        </authorList>
    </citation>
    <scope>NUCLEOTIDE SEQUENCE [LARGE SCALE GENOMIC DNA]</scope>
    <source>
        <strain>ATCC BAA-1114 / GMI1000</strain>
    </source>
</reference>
<feature type="chain" id="PRO_0000140634" description="Chorismate synthase">
    <location>
        <begin position="1"/>
        <end position="366"/>
    </location>
</feature>
<feature type="binding site" evidence="1">
    <location>
        <position position="48"/>
    </location>
    <ligand>
        <name>NADP(+)</name>
        <dbReference type="ChEBI" id="CHEBI:58349"/>
    </ligand>
</feature>
<feature type="binding site" evidence="1">
    <location>
        <position position="54"/>
    </location>
    <ligand>
        <name>NADP(+)</name>
        <dbReference type="ChEBI" id="CHEBI:58349"/>
    </ligand>
</feature>
<feature type="binding site" evidence="1">
    <location>
        <begin position="125"/>
        <end position="127"/>
    </location>
    <ligand>
        <name>FMN</name>
        <dbReference type="ChEBI" id="CHEBI:58210"/>
    </ligand>
</feature>
<feature type="binding site" evidence="1">
    <location>
        <begin position="238"/>
        <end position="239"/>
    </location>
    <ligand>
        <name>FMN</name>
        <dbReference type="ChEBI" id="CHEBI:58210"/>
    </ligand>
</feature>
<feature type="binding site" evidence="1">
    <location>
        <position position="278"/>
    </location>
    <ligand>
        <name>FMN</name>
        <dbReference type="ChEBI" id="CHEBI:58210"/>
    </ligand>
</feature>
<feature type="binding site" evidence="1">
    <location>
        <begin position="293"/>
        <end position="297"/>
    </location>
    <ligand>
        <name>FMN</name>
        <dbReference type="ChEBI" id="CHEBI:58210"/>
    </ligand>
</feature>
<feature type="binding site" evidence="1">
    <location>
        <position position="319"/>
    </location>
    <ligand>
        <name>FMN</name>
        <dbReference type="ChEBI" id="CHEBI:58210"/>
    </ligand>
</feature>
<evidence type="ECO:0000255" key="1">
    <source>
        <dbReference type="HAMAP-Rule" id="MF_00300"/>
    </source>
</evidence>
<dbReference type="EC" id="4.2.3.5" evidence="1"/>
<dbReference type="EMBL" id="AL646052">
    <property type="protein sequence ID" value="CAD15268.1"/>
    <property type="molecule type" value="Genomic_DNA"/>
</dbReference>
<dbReference type="RefSeq" id="WP_011001510.1">
    <property type="nucleotide sequence ID" value="NC_003295.1"/>
</dbReference>
<dbReference type="SMR" id="Q8XZ40"/>
<dbReference type="STRING" id="267608.RSc1566"/>
<dbReference type="EnsemblBacteria" id="CAD15268">
    <property type="protein sequence ID" value="CAD15268"/>
    <property type="gene ID" value="RSc1566"/>
</dbReference>
<dbReference type="KEGG" id="rso:RSc1566"/>
<dbReference type="eggNOG" id="COG0082">
    <property type="taxonomic scope" value="Bacteria"/>
</dbReference>
<dbReference type="HOGENOM" id="CLU_034547_0_2_4"/>
<dbReference type="UniPathway" id="UPA00053">
    <property type="reaction ID" value="UER00090"/>
</dbReference>
<dbReference type="Proteomes" id="UP000001436">
    <property type="component" value="Chromosome"/>
</dbReference>
<dbReference type="GO" id="GO:0005829">
    <property type="term" value="C:cytosol"/>
    <property type="evidence" value="ECO:0007669"/>
    <property type="project" value="TreeGrafter"/>
</dbReference>
<dbReference type="GO" id="GO:0004107">
    <property type="term" value="F:chorismate synthase activity"/>
    <property type="evidence" value="ECO:0007669"/>
    <property type="project" value="UniProtKB-UniRule"/>
</dbReference>
<dbReference type="GO" id="GO:0010181">
    <property type="term" value="F:FMN binding"/>
    <property type="evidence" value="ECO:0007669"/>
    <property type="project" value="TreeGrafter"/>
</dbReference>
<dbReference type="GO" id="GO:0008652">
    <property type="term" value="P:amino acid biosynthetic process"/>
    <property type="evidence" value="ECO:0007669"/>
    <property type="project" value="UniProtKB-KW"/>
</dbReference>
<dbReference type="GO" id="GO:0009073">
    <property type="term" value="P:aromatic amino acid family biosynthetic process"/>
    <property type="evidence" value="ECO:0007669"/>
    <property type="project" value="UniProtKB-KW"/>
</dbReference>
<dbReference type="GO" id="GO:0009423">
    <property type="term" value="P:chorismate biosynthetic process"/>
    <property type="evidence" value="ECO:0007669"/>
    <property type="project" value="UniProtKB-UniRule"/>
</dbReference>
<dbReference type="CDD" id="cd07304">
    <property type="entry name" value="Chorismate_synthase"/>
    <property type="match status" value="1"/>
</dbReference>
<dbReference type="FunFam" id="3.60.150.10:FF:000001">
    <property type="entry name" value="Chorismate synthase"/>
    <property type="match status" value="1"/>
</dbReference>
<dbReference type="Gene3D" id="3.60.150.10">
    <property type="entry name" value="Chorismate synthase AroC"/>
    <property type="match status" value="1"/>
</dbReference>
<dbReference type="HAMAP" id="MF_00300">
    <property type="entry name" value="Chorismate_synth"/>
    <property type="match status" value="1"/>
</dbReference>
<dbReference type="InterPro" id="IPR000453">
    <property type="entry name" value="Chorismate_synth"/>
</dbReference>
<dbReference type="InterPro" id="IPR035904">
    <property type="entry name" value="Chorismate_synth_AroC_sf"/>
</dbReference>
<dbReference type="InterPro" id="IPR020541">
    <property type="entry name" value="Chorismate_synthase_CS"/>
</dbReference>
<dbReference type="NCBIfam" id="TIGR00033">
    <property type="entry name" value="aroC"/>
    <property type="match status" value="1"/>
</dbReference>
<dbReference type="NCBIfam" id="NF003793">
    <property type="entry name" value="PRK05382.1"/>
    <property type="match status" value="1"/>
</dbReference>
<dbReference type="PANTHER" id="PTHR21085">
    <property type="entry name" value="CHORISMATE SYNTHASE"/>
    <property type="match status" value="1"/>
</dbReference>
<dbReference type="PANTHER" id="PTHR21085:SF0">
    <property type="entry name" value="CHORISMATE SYNTHASE"/>
    <property type="match status" value="1"/>
</dbReference>
<dbReference type="Pfam" id="PF01264">
    <property type="entry name" value="Chorismate_synt"/>
    <property type="match status" value="1"/>
</dbReference>
<dbReference type="PIRSF" id="PIRSF001456">
    <property type="entry name" value="Chorismate_synth"/>
    <property type="match status" value="1"/>
</dbReference>
<dbReference type="SUPFAM" id="SSF103263">
    <property type="entry name" value="Chorismate synthase, AroC"/>
    <property type="match status" value="1"/>
</dbReference>
<dbReference type="PROSITE" id="PS00787">
    <property type="entry name" value="CHORISMATE_SYNTHASE_1"/>
    <property type="match status" value="1"/>
</dbReference>
<dbReference type="PROSITE" id="PS00788">
    <property type="entry name" value="CHORISMATE_SYNTHASE_2"/>
    <property type="match status" value="1"/>
</dbReference>
<dbReference type="PROSITE" id="PS00789">
    <property type="entry name" value="CHORISMATE_SYNTHASE_3"/>
    <property type="match status" value="1"/>
</dbReference>
<comment type="function">
    <text evidence="1">Catalyzes the anti-1,4-elimination of the C-3 phosphate and the C-6 proR hydrogen from 5-enolpyruvylshikimate-3-phosphate (EPSP) to yield chorismate, which is the branch point compound that serves as the starting substrate for the three terminal pathways of aromatic amino acid biosynthesis. This reaction introduces a second double bond into the aromatic ring system.</text>
</comment>
<comment type="catalytic activity">
    <reaction evidence="1">
        <text>5-O-(1-carboxyvinyl)-3-phosphoshikimate = chorismate + phosphate</text>
        <dbReference type="Rhea" id="RHEA:21020"/>
        <dbReference type="ChEBI" id="CHEBI:29748"/>
        <dbReference type="ChEBI" id="CHEBI:43474"/>
        <dbReference type="ChEBI" id="CHEBI:57701"/>
        <dbReference type="EC" id="4.2.3.5"/>
    </reaction>
</comment>
<comment type="cofactor">
    <cofactor evidence="1">
        <name>FMNH2</name>
        <dbReference type="ChEBI" id="CHEBI:57618"/>
    </cofactor>
    <text evidence="1">Reduced FMN (FMNH(2)).</text>
</comment>
<comment type="pathway">
    <text evidence="1">Metabolic intermediate biosynthesis; chorismate biosynthesis; chorismate from D-erythrose 4-phosphate and phosphoenolpyruvate: step 7/7.</text>
</comment>
<comment type="subunit">
    <text evidence="1">Homotetramer.</text>
</comment>
<comment type="similarity">
    <text evidence="1">Belongs to the chorismate synthase family.</text>
</comment>